<evidence type="ECO:0000250" key="1">
    <source>
        <dbReference type="UniProtKB" id="P40416"/>
    </source>
</evidence>
<evidence type="ECO:0000250" key="2">
    <source>
        <dbReference type="UniProtKB" id="Q2G506"/>
    </source>
</evidence>
<evidence type="ECO:0000250" key="3">
    <source>
        <dbReference type="UniProtKB" id="Q9NP58"/>
    </source>
</evidence>
<evidence type="ECO:0000255" key="4"/>
<evidence type="ECO:0000255" key="5">
    <source>
        <dbReference type="PROSITE-ProRule" id="PRU00434"/>
    </source>
</evidence>
<evidence type="ECO:0000255" key="6">
    <source>
        <dbReference type="PROSITE-ProRule" id="PRU00441"/>
    </source>
</evidence>
<evidence type="ECO:0000256" key="7">
    <source>
        <dbReference type="SAM" id="MobiDB-lite"/>
    </source>
</evidence>
<evidence type="ECO:0000305" key="8"/>
<comment type="function">
    <text evidence="1">Performs an essential function in the generation of cytoplasmic iron-sulfur proteins by mediating the ATP-dependent export of Fe/S cluster precursors synthesized by NFS1 and other mitochondrial proteins (By similarity). Hydrolyzes ATP (By similarity). Binds glutathione and may function by transporting a glutathione-conjugated iron-sulfur compound (By similarity).</text>
</comment>
<comment type="subunit">
    <text evidence="1">Homodimer.</text>
</comment>
<comment type="subcellular location">
    <subcellularLocation>
        <location evidence="1">Mitochondrion inner membrane</location>
        <topology evidence="6">Multi-pass membrane protein</topology>
    </subcellularLocation>
</comment>
<comment type="similarity">
    <text evidence="8">Belongs to the ABC transporter superfamily. ABCB family. Heavy Metal importer (TC 3.A.1.210) subfamily.</text>
</comment>
<comment type="sequence caution" evidence="8">
    <conflict type="erroneous initiation">
        <sequence resource="EMBL-CDS" id="KIS72179"/>
    </conflict>
    <text>Truncated N-terminus.</text>
</comment>
<protein>
    <recommendedName>
        <fullName evidence="8">Iron-sulfur clusters transporter ATM1, mitochondrial</fullName>
        <ecNumber evidence="2">7.-.-.-</ecNumber>
    </recommendedName>
</protein>
<accession>Q4PH16</accession>
<accession>A0A0D1E8N7</accession>
<organism>
    <name type="scientific">Mycosarcoma maydis</name>
    <name type="common">Corn smut fungus</name>
    <name type="synonym">Ustilago maydis</name>
    <dbReference type="NCBI Taxonomy" id="5270"/>
    <lineage>
        <taxon>Eukaryota</taxon>
        <taxon>Fungi</taxon>
        <taxon>Dikarya</taxon>
        <taxon>Basidiomycota</taxon>
        <taxon>Ustilaginomycotina</taxon>
        <taxon>Ustilaginomycetes</taxon>
        <taxon>Ustilaginales</taxon>
        <taxon>Ustilaginaceae</taxon>
        <taxon>Mycosarcoma</taxon>
    </lineage>
</organism>
<gene>
    <name evidence="8" type="primary">ATM1</name>
    <name type="ORF">UMAG_00597</name>
</gene>
<keyword id="KW-0067">ATP-binding</keyword>
<keyword id="KW-0472">Membrane</keyword>
<keyword id="KW-0496">Mitochondrion</keyword>
<keyword id="KW-0999">Mitochondrion inner membrane</keyword>
<keyword id="KW-0547">Nucleotide-binding</keyword>
<keyword id="KW-1185">Reference proteome</keyword>
<keyword id="KW-0809">Transit peptide</keyword>
<keyword id="KW-1278">Translocase</keyword>
<keyword id="KW-0812">Transmembrane</keyword>
<keyword id="KW-1133">Transmembrane helix</keyword>
<keyword id="KW-0813">Transport</keyword>
<sequence length="763" mass="84056">MRVAIRRLPWQATDARHRTIGLVSTNRLPSRIQPRSISSTSIAALVYHSRNSLRTNIFDIAATPSSRYGSSQRFYQHMAADRDGDHVPKHQAKMLPGSASDKIIAAASPASKSASSPAQKKQPDGDDPLNLNSREKTVKEQRLVDWAIIKKLIQYVWPKGDFGTKQRVVLALALLIGGKLLNVQVPFFFKTIVDRLNDVVNAPLDMSNPNTVWVVAGSAVLGYGLARVGAAAFSELRNAVFANVAQRSIRRVAKSVFTHLLALDLGWHLTRQTGGLTRAIDRGTKGISFLLTSIVFHIVPTALEISMVCGILSYKCGPSFAAVTAITMAAYAWFTIRTTSWRTRFRKEANAADNRAATTSVDSLLNYEAVKYFNNEKHEIAKYDAALADYEKSSIKVATSLAALNSGQNAIFSTSLTVMMLLAAQGVTNGTMTVGDLVMVNQLVFQLSLPLNFLGTVYRELRQSLVDMETMFNLENVNVAVKEDKNAPPLKVSGGEIRFENVTFGYHPDRPIFRNISFTVPAGYKTAFVGPSGCGKSTIFRLLFRFYEPQSGKIYIDGQDITKVSLESLRRHIGVVPQDTPLFNDDIRHNIRYGRLDASDEDVEKAARAAKVDQIVLNLPEGYSTKVGERGLMISGGEKQRLAVARLLLKNPSVLFFDEATSALDSYTETELMRNIHATLLADKKTAIFVAHRLRTISDSDFIIVLQGGGVKEQGTHDQLMDSKGLYWDLWQAQSTVGVGHGAGANEHLQDLERDQNSSTTPM</sequence>
<dbReference type="EC" id="7.-.-.-" evidence="2"/>
<dbReference type="EMBL" id="CM003140">
    <property type="protein sequence ID" value="KIS72179.1"/>
    <property type="status" value="ALT_INIT"/>
    <property type="molecule type" value="Genomic_DNA"/>
</dbReference>
<dbReference type="RefSeq" id="XP_011386421.1">
    <property type="nucleotide sequence ID" value="XM_011388119.1"/>
</dbReference>
<dbReference type="SMR" id="Q4PH16"/>
<dbReference type="FunCoup" id="Q4PH16">
    <property type="interactions" value="326"/>
</dbReference>
<dbReference type="STRING" id="237631.Q4PH16"/>
<dbReference type="EnsemblFungi" id="KIS72179">
    <property type="protein sequence ID" value="KIS72179"/>
    <property type="gene ID" value="UMAG_00597"/>
</dbReference>
<dbReference type="GeneID" id="23561854"/>
<dbReference type="KEGG" id="uma:UMAG_00597"/>
<dbReference type="eggNOG" id="KOG0057">
    <property type="taxonomic scope" value="Eukaryota"/>
</dbReference>
<dbReference type="HOGENOM" id="CLU_000604_84_1_1"/>
<dbReference type="InParanoid" id="Q4PH16"/>
<dbReference type="OMA" id="VFHIIPI"/>
<dbReference type="OrthoDB" id="6500128at2759"/>
<dbReference type="Proteomes" id="UP000000561">
    <property type="component" value="Chromosome 1"/>
</dbReference>
<dbReference type="GO" id="GO:0005743">
    <property type="term" value="C:mitochondrial inner membrane"/>
    <property type="evidence" value="ECO:0000318"/>
    <property type="project" value="GO_Central"/>
</dbReference>
<dbReference type="GO" id="GO:0140359">
    <property type="term" value="F:ABC-type transporter activity"/>
    <property type="evidence" value="ECO:0007669"/>
    <property type="project" value="InterPro"/>
</dbReference>
<dbReference type="GO" id="GO:0005524">
    <property type="term" value="F:ATP binding"/>
    <property type="evidence" value="ECO:0007669"/>
    <property type="project" value="UniProtKB-KW"/>
</dbReference>
<dbReference type="GO" id="GO:0016887">
    <property type="term" value="F:ATP hydrolysis activity"/>
    <property type="evidence" value="ECO:0007669"/>
    <property type="project" value="InterPro"/>
</dbReference>
<dbReference type="GO" id="GO:0042626">
    <property type="term" value="F:ATPase-coupled transmembrane transporter activity"/>
    <property type="evidence" value="ECO:0000318"/>
    <property type="project" value="GO_Central"/>
</dbReference>
<dbReference type="GO" id="GO:0006879">
    <property type="term" value="P:intracellular iron ion homeostasis"/>
    <property type="evidence" value="ECO:0000318"/>
    <property type="project" value="GO_Central"/>
</dbReference>
<dbReference type="GO" id="GO:0055085">
    <property type="term" value="P:transmembrane transport"/>
    <property type="evidence" value="ECO:0000318"/>
    <property type="project" value="GO_Central"/>
</dbReference>
<dbReference type="CDD" id="cd18582">
    <property type="entry name" value="ABC_6TM_ATM1_ABCB7"/>
    <property type="match status" value="1"/>
</dbReference>
<dbReference type="CDD" id="cd03253">
    <property type="entry name" value="ABCC_ATM1_transporter"/>
    <property type="match status" value="1"/>
</dbReference>
<dbReference type="FunFam" id="1.20.1560.10:FF:000004">
    <property type="entry name" value="ATP-binding cassette sub-family B member 7"/>
    <property type="match status" value="1"/>
</dbReference>
<dbReference type="FunFam" id="3.40.50.300:FF:000186">
    <property type="entry name" value="ATP-binding cassette sub-family B member 7, mitochondrial"/>
    <property type="match status" value="1"/>
</dbReference>
<dbReference type="Gene3D" id="1.20.1560.10">
    <property type="entry name" value="ABC transporter type 1, transmembrane domain"/>
    <property type="match status" value="1"/>
</dbReference>
<dbReference type="Gene3D" id="3.40.50.300">
    <property type="entry name" value="P-loop containing nucleotide triphosphate hydrolases"/>
    <property type="match status" value="1"/>
</dbReference>
<dbReference type="InterPro" id="IPR003593">
    <property type="entry name" value="AAA+_ATPase"/>
</dbReference>
<dbReference type="InterPro" id="IPR011527">
    <property type="entry name" value="ABC1_TM_dom"/>
</dbReference>
<dbReference type="InterPro" id="IPR036640">
    <property type="entry name" value="ABC1_TM_sf"/>
</dbReference>
<dbReference type="InterPro" id="IPR003439">
    <property type="entry name" value="ABC_transporter-like_ATP-bd"/>
</dbReference>
<dbReference type="InterPro" id="IPR017871">
    <property type="entry name" value="ABC_transporter-like_CS"/>
</dbReference>
<dbReference type="InterPro" id="IPR027417">
    <property type="entry name" value="P-loop_NTPase"/>
</dbReference>
<dbReference type="InterPro" id="IPR039421">
    <property type="entry name" value="Type_1_exporter"/>
</dbReference>
<dbReference type="PANTHER" id="PTHR24221">
    <property type="entry name" value="ATP-BINDING CASSETTE SUB-FAMILY B"/>
    <property type="match status" value="1"/>
</dbReference>
<dbReference type="PANTHER" id="PTHR24221:SF402">
    <property type="entry name" value="IRON-SULFUR CLUSTERS TRANSPORTER ABCB7, MITOCHONDRIAL"/>
    <property type="match status" value="1"/>
</dbReference>
<dbReference type="Pfam" id="PF00664">
    <property type="entry name" value="ABC_membrane"/>
    <property type="match status" value="1"/>
</dbReference>
<dbReference type="Pfam" id="PF00005">
    <property type="entry name" value="ABC_tran"/>
    <property type="match status" value="1"/>
</dbReference>
<dbReference type="SMART" id="SM00382">
    <property type="entry name" value="AAA"/>
    <property type="match status" value="1"/>
</dbReference>
<dbReference type="SUPFAM" id="SSF90123">
    <property type="entry name" value="ABC transporter transmembrane region"/>
    <property type="match status" value="1"/>
</dbReference>
<dbReference type="SUPFAM" id="SSF52540">
    <property type="entry name" value="P-loop containing nucleoside triphosphate hydrolases"/>
    <property type="match status" value="1"/>
</dbReference>
<dbReference type="PROSITE" id="PS50929">
    <property type="entry name" value="ABC_TM1F"/>
    <property type="match status" value="1"/>
</dbReference>
<dbReference type="PROSITE" id="PS00211">
    <property type="entry name" value="ABC_TRANSPORTER_1"/>
    <property type="match status" value="1"/>
</dbReference>
<dbReference type="PROSITE" id="PS50893">
    <property type="entry name" value="ABC_TRANSPORTER_2"/>
    <property type="match status" value="1"/>
</dbReference>
<reference key="1">
    <citation type="journal article" date="2006" name="Nature">
        <title>Insights from the genome of the biotrophic fungal plant pathogen Ustilago maydis.</title>
        <authorList>
            <person name="Kaemper J."/>
            <person name="Kahmann R."/>
            <person name="Boelker M."/>
            <person name="Ma L.-J."/>
            <person name="Brefort T."/>
            <person name="Saville B.J."/>
            <person name="Banuett F."/>
            <person name="Kronstad J.W."/>
            <person name="Gold S.E."/>
            <person name="Mueller O."/>
            <person name="Perlin M.H."/>
            <person name="Woesten H.A.B."/>
            <person name="de Vries R."/>
            <person name="Ruiz-Herrera J."/>
            <person name="Reynaga-Pena C.G."/>
            <person name="Snetselaar K."/>
            <person name="McCann M."/>
            <person name="Perez-Martin J."/>
            <person name="Feldbruegge M."/>
            <person name="Basse C.W."/>
            <person name="Steinberg G."/>
            <person name="Ibeas J.I."/>
            <person name="Holloman W."/>
            <person name="Guzman P."/>
            <person name="Farman M.L."/>
            <person name="Stajich J.E."/>
            <person name="Sentandreu R."/>
            <person name="Gonzalez-Prieto J.M."/>
            <person name="Kennell J.C."/>
            <person name="Molina L."/>
            <person name="Schirawski J."/>
            <person name="Mendoza-Mendoza A."/>
            <person name="Greilinger D."/>
            <person name="Muench K."/>
            <person name="Roessel N."/>
            <person name="Scherer M."/>
            <person name="Vranes M."/>
            <person name="Ladendorf O."/>
            <person name="Vincon V."/>
            <person name="Fuchs U."/>
            <person name="Sandrock B."/>
            <person name="Meng S."/>
            <person name="Ho E.C.H."/>
            <person name="Cahill M.J."/>
            <person name="Boyce K.J."/>
            <person name="Klose J."/>
            <person name="Klosterman S.J."/>
            <person name="Deelstra H.J."/>
            <person name="Ortiz-Castellanos L."/>
            <person name="Li W."/>
            <person name="Sanchez-Alonso P."/>
            <person name="Schreier P.H."/>
            <person name="Haeuser-Hahn I."/>
            <person name="Vaupel M."/>
            <person name="Koopmann E."/>
            <person name="Friedrich G."/>
            <person name="Voss H."/>
            <person name="Schlueter T."/>
            <person name="Margolis J."/>
            <person name="Platt D."/>
            <person name="Swimmer C."/>
            <person name="Gnirke A."/>
            <person name="Chen F."/>
            <person name="Vysotskaia V."/>
            <person name="Mannhaupt G."/>
            <person name="Gueldener U."/>
            <person name="Muensterkoetter M."/>
            <person name="Haase D."/>
            <person name="Oesterheld M."/>
            <person name="Mewes H.-W."/>
            <person name="Mauceli E.W."/>
            <person name="DeCaprio D."/>
            <person name="Wade C.M."/>
            <person name="Butler J."/>
            <person name="Young S.K."/>
            <person name="Jaffe D.B."/>
            <person name="Calvo S.E."/>
            <person name="Nusbaum C."/>
            <person name="Galagan J.E."/>
            <person name="Birren B.W."/>
        </authorList>
    </citation>
    <scope>NUCLEOTIDE SEQUENCE [LARGE SCALE GENOMIC DNA]</scope>
    <source>
        <strain>DSM 14603 / FGSC 9021 / UM521</strain>
    </source>
</reference>
<reference key="2">
    <citation type="submission" date="2014-09" db="EMBL/GenBank/DDBJ databases">
        <authorList>
            <person name="Gueldener U."/>
            <person name="Muensterkoetter M."/>
            <person name="Walter M.C."/>
            <person name="Mannhaupt G."/>
            <person name="Kahmann R."/>
        </authorList>
    </citation>
    <scope>GENOME REANNOTATION</scope>
    <source>
        <strain>DSM 14603 / FGSC 9021 / UM521</strain>
    </source>
</reference>
<feature type="transit peptide" description="Mitochondrion" evidence="4">
    <location>
        <begin position="1"/>
        <end position="44"/>
    </location>
</feature>
<feature type="chain" id="PRO_0000255449" description="Iron-sulfur clusters transporter ATM1, mitochondrial">
    <location>
        <begin position="45"/>
        <end position="763"/>
    </location>
</feature>
<feature type="topological domain" description="Mitochondrial matrix" evidence="1">
    <location>
        <begin position="45"/>
        <end position="167"/>
    </location>
</feature>
<feature type="transmembrane region" description="Helical" evidence="6">
    <location>
        <begin position="168"/>
        <end position="189"/>
    </location>
</feature>
<feature type="topological domain" description="Mitochondrial intermembrane" evidence="1">
    <location>
        <begin position="190"/>
        <end position="217"/>
    </location>
</feature>
<feature type="transmembrane region" description="Helical" evidence="6">
    <location>
        <begin position="218"/>
        <end position="241"/>
    </location>
</feature>
<feature type="topological domain" description="Mitochondrial matrix" evidence="1">
    <location>
        <begin position="242"/>
        <end position="290"/>
    </location>
</feature>
<feature type="transmembrane region" description="Helical" evidence="6">
    <location>
        <begin position="291"/>
        <end position="314"/>
    </location>
</feature>
<feature type="topological domain" description="Mitochondrial intermembrane" evidence="1">
    <location>
        <position position="315"/>
    </location>
</feature>
<feature type="transmembrane region" description="Helical" evidence="6">
    <location>
        <begin position="316"/>
        <end position="336"/>
    </location>
</feature>
<feature type="topological domain" description="Mitochondrial matrix" evidence="1">
    <location>
        <begin position="337"/>
        <end position="402"/>
    </location>
</feature>
<feature type="transmembrane region" description="Helical" evidence="6">
    <location>
        <begin position="403"/>
        <end position="421"/>
    </location>
</feature>
<feature type="topological domain" description="Mitochondrial intermembrane" evidence="1">
    <location>
        <begin position="422"/>
        <end position="436"/>
    </location>
</feature>
<feature type="transmembrane region" description="Helical" evidence="6">
    <location>
        <begin position="437"/>
        <end position="458"/>
    </location>
</feature>
<feature type="topological domain" description="Mitochondrial matrix" evidence="1">
    <location>
        <begin position="459"/>
        <end position="763"/>
    </location>
</feature>
<feature type="domain" description="ABC transmembrane type-1" evidence="6">
    <location>
        <begin position="168"/>
        <end position="463"/>
    </location>
</feature>
<feature type="domain" description="ABC transporter" evidence="5">
    <location>
        <begin position="497"/>
        <end position="733"/>
    </location>
</feature>
<feature type="region of interest" description="Disordered" evidence="7">
    <location>
        <begin position="107"/>
        <end position="133"/>
    </location>
</feature>
<feature type="compositionally biased region" description="Low complexity" evidence="7">
    <location>
        <begin position="107"/>
        <end position="118"/>
    </location>
</feature>
<feature type="binding site" evidence="1">
    <location>
        <begin position="342"/>
        <end position="346"/>
    </location>
    <ligand>
        <name>glutathione</name>
        <dbReference type="ChEBI" id="CHEBI:57925"/>
    </ligand>
</feature>
<feature type="binding site" evidence="1">
    <location>
        <begin position="405"/>
        <end position="408"/>
    </location>
    <ligand>
        <name>glutathione</name>
        <dbReference type="ChEBI" id="CHEBI:57925"/>
    </ligand>
</feature>
<feature type="binding site" evidence="2">
    <location>
        <position position="455"/>
    </location>
    <ligand>
        <name>glutathione</name>
        <dbReference type="ChEBI" id="CHEBI:57925"/>
    </ligand>
</feature>
<feature type="binding site" evidence="3">
    <location>
        <position position="506"/>
    </location>
    <ligand>
        <name>ATP</name>
        <dbReference type="ChEBI" id="CHEBI:30616"/>
    </ligand>
</feature>
<feature type="binding site" evidence="5">
    <location>
        <begin position="530"/>
        <end position="541"/>
    </location>
    <ligand>
        <name>ATP</name>
        <dbReference type="ChEBI" id="CHEBI:30616"/>
    </ligand>
</feature>
<name>ATM1_MYCMD</name>
<proteinExistence type="inferred from homology"/>